<protein>
    <recommendedName>
        <fullName evidence="1">Cytochrome b6-f complex subunit 5</fullName>
    </recommendedName>
    <alternativeName>
        <fullName evidence="1">Cytochrome b6-f complex subunit PetG</fullName>
    </alternativeName>
    <alternativeName>
        <fullName evidence="1">Cytochrome b6-f complex subunit V</fullName>
    </alternativeName>
</protein>
<accession>Q6YXM1</accession>
<keyword id="KW-0150">Chloroplast</keyword>
<keyword id="KW-0249">Electron transport</keyword>
<keyword id="KW-0472">Membrane</keyword>
<keyword id="KW-0602">Photosynthesis</keyword>
<keyword id="KW-0934">Plastid</keyword>
<keyword id="KW-1185">Reference proteome</keyword>
<keyword id="KW-0793">Thylakoid</keyword>
<keyword id="KW-0812">Transmembrane</keyword>
<keyword id="KW-1133">Transmembrane helix</keyword>
<keyword id="KW-0813">Transport</keyword>
<gene>
    <name evidence="1" type="primary">petG</name>
</gene>
<feature type="chain" id="PRO_0000216397" description="Cytochrome b6-f complex subunit 5">
    <location>
        <begin position="1"/>
        <end position="37"/>
    </location>
</feature>
<feature type="transmembrane region" description="Helical" evidence="1">
    <location>
        <begin position="5"/>
        <end position="25"/>
    </location>
</feature>
<sequence length="37" mass="4034">MVEALLSGIVLGLIPITLAGLFVTAYLQYRRGDQLDL</sequence>
<proteinExistence type="inferred from homology"/>
<reference key="1">
    <citation type="journal article" date="2003" name="Nucleic Acids Res.">
        <title>Complete chloroplast DNA sequence of the moss Physcomitrella patens: evidence for the loss and relocation of rpoA from the chloroplast to the nucleus.</title>
        <authorList>
            <person name="Sugiura C."/>
            <person name="Kobayashi Y."/>
            <person name="Setsuyuki A."/>
            <person name="Sugita C."/>
            <person name="Sugita M."/>
        </authorList>
    </citation>
    <scope>NUCLEOTIDE SEQUENCE [LARGE SCALE GENOMIC DNA]</scope>
    <source>
        <strain>cv. Gransden 2004</strain>
    </source>
</reference>
<evidence type="ECO:0000255" key="1">
    <source>
        <dbReference type="HAMAP-Rule" id="MF_00432"/>
    </source>
</evidence>
<dbReference type="EMBL" id="AP005672">
    <property type="protein sequence ID" value="BAC85031.1"/>
    <property type="molecule type" value="Genomic_DNA"/>
</dbReference>
<dbReference type="RefSeq" id="NP_904181.1">
    <property type="nucleotide sequence ID" value="NC_005087.2"/>
</dbReference>
<dbReference type="RefSeq" id="YP_009477512.1">
    <property type="nucleotide sequence ID" value="NC_037465.1"/>
</dbReference>
<dbReference type="SMR" id="Q6YXM1"/>
<dbReference type="FunCoup" id="Q6YXM1">
    <property type="interactions" value="44"/>
</dbReference>
<dbReference type="STRING" id="3218.Q6YXM1"/>
<dbReference type="GeneID" id="2546707"/>
<dbReference type="GeneID" id="36487126"/>
<dbReference type="KEGG" id="ppp:2546707"/>
<dbReference type="InParanoid" id="Q6YXM1"/>
<dbReference type="OrthoDB" id="35473at2759"/>
<dbReference type="Proteomes" id="UP000006727">
    <property type="component" value="Chloroplast"/>
</dbReference>
<dbReference type="GO" id="GO:0009535">
    <property type="term" value="C:chloroplast thylakoid membrane"/>
    <property type="evidence" value="ECO:0007669"/>
    <property type="project" value="UniProtKB-SubCell"/>
</dbReference>
<dbReference type="GO" id="GO:0009512">
    <property type="term" value="C:cytochrome b6f complex"/>
    <property type="evidence" value="ECO:0007669"/>
    <property type="project" value="InterPro"/>
</dbReference>
<dbReference type="GO" id="GO:0045158">
    <property type="term" value="F:electron transporter, transferring electrons within cytochrome b6/f complex of photosystem II activity"/>
    <property type="evidence" value="ECO:0007669"/>
    <property type="project" value="UniProtKB-UniRule"/>
</dbReference>
<dbReference type="GO" id="GO:0017004">
    <property type="term" value="P:cytochrome complex assembly"/>
    <property type="evidence" value="ECO:0007669"/>
    <property type="project" value="UniProtKB-UniRule"/>
</dbReference>
<dbReference type="GO" id="GO:0015979">
    <property type="term" value="P:photosynthesis"/>
    <property type="evidence" value="ECO:0007669"/>
    <property type="project" value="UniProtKB-KW"/>
</dbReference>
<dbReference type="HAMAP" id="MF_00432">
    <property type="entry name" value="Cytb6_f_PetG"/>
    <property type="match status" value="1"/>
</dbReference>
<dbReference type="InterPro" id="IPR003683">
    <property type="entry name" value="Cyt_6/f_cplx_su5"/>
</dbReference>
<dbReference type="InterPro" id="IPR036099">
    <property type="entry name" value="Cyt_6/f_cplx_su5_sf"/>
</dbReference>
<dbReference type="NCBIfam" id="NF001907">
    <property type="entry name" value="PRK00665.1"/>
    <property type="match status" value="1"/>
</dbReference>
<dbReference type="Pfam" id="PF02529">
    <property type="entry name" value="PetG"/>
    <property type="match status" value="1"/>
</dbReference>
<dbReference type="PIRSF" id="PIRSF000034">
    <property type="entry name" value="Cyt_b6-f_V"/>
    <property type="match status" value="1"/>
</dbReference>
<dbReference type="SUPFAM" id="SSF103446">
    <property type="entry name" value="PetG subunit of the cytochrome b6f complex"/>
    <property type="match status" value="1"/>
</dbReference>
<comment type="function">
    <text evidence="1">Component of the cytochrome b6-f complex, which mediates electron transfer between photosystem II (PSII) and photosystem I (PSI), cyclic electron flow around PSI, and state transitions. PetG is required for either the stability or assembly of the cytochrome b6-f complex.</text>
</comment>
<comment type="subunit">
    <text evidence="1">The 4 large subunits of the cytochrome b6-f complex are cytochrome b6, subunit IV (17 kDa polypeptide, PetD), cytochrome f and the Rieske protein, while the 4 small subunits are PetG, PetL, PetM and PetN. The complex functions as a dimer.</text>
</comment>
<comment type="subcellular location">
    <subcellularLocation>
        <location evidence="1">Plastid</location>
        <location evidence="1">Chloroplast thylakoid membrane</location>
        <topology evidence="1">Single-pass membrane protein</topology>
    </subcellularLocation>
</comment>
<comment type="similarity">
    <text evidence="1">Belongs to the PetG family.</text>
</comment>
<organism>
    <name type="scientific">Physcomitrium patens</name>
    <name type="common">Spreading-leaved earth moss</name>
    <name type="synonym">Physcomitrella patens</name>
    <dbReference type="NCBI Taxonomy" id="3218"/>
    <lineage>
        <taxon>Eukaryota</taxon>
        <taxon>Viridiplantae</taxon>
        <taxon>Streptophyta</taxon>
        <taxon>Embryophyta</taxon>
        <taxon>Bryophyta</taxon>
        <taxon>Bryophytina</taxon>
        <taxon>Bryopsida</taxon>
        <taxon>Funariidae</taxon>
        <taxon>Funariales</taxon>
        <taxon>Funariaceae</taxon>
        <taxon>Physcomitrium</taxon>
    </lineage>
</organism>
<geneLocation type="chloroplast"/>
<name>PETG_PHYPA</name>